<keyword id="KW-1003">Cell membrane</keyword>
<keyword id="KW-1015">Disulfide bond</keyword>
<keyword id="KW-0297">G-protein coupled receptor</keyword>
<keyword id="KW-0325">Glycoprotein</keyword>
<keyword id="KW-0449">Lipoprotein</keyword>
<keyword id="KW-0472">Membrane</keyword>
<keyword id="KW-0564">Palmitate</keyword>
<keyword id="KW-0675">Receptor</keyword>
<keyword id="KW-0807">Transducer</keyword>
<keyword id="KW-0812">Transmembrane</keyword>
<keyword id="KW-1133">Transmembrane helix</keyword>
<gene>
    <name type="primary">HRH2</name>
</gene>
<dbReference type="EMBL" id="AB041387">
    <property type="protein sequence ID" value="BAA94472.1"/>
    <property type="molecule type" value="Genomic_DNA"/>
</dbReference>
<dbReference type="SMR" id="P61752"/>
<dbReference type="GlyCosmos" id="P61752">
    <property type="glycosylation" value="1 site, No reported glycans"/>
</dbReference>
<dbReference type="GO" id="GO:0030425">
    <property type="term" value="C:dendrite"/>
    <property type="evidence" value="ECO:0007669"/>
    <property type="project" value="TreeGrafter"/>
</dbReference>
<dbReference type="GO" id="GO:0005886">
    <property type="term" value="C:plasma membrane"/>
    <property type="evidence" value="ECO:0007669"/>
    <property type="project" value="UniProtKB-SubCell"/>
</dbReference>
<dbReference type="GO" id="GO:0045202">
    <property type="term" value="C:synapse"/>
    <property type="evidence" value="ECO:0007669"/>
    <property type="project" value="GOC"/>
</dbReference>
<dbReference type="GO" id="GO:0004993">
    <property type="term" value="F:G protein-coupled serotonin receptor activity"/>
    <property type="evidence" value="ECO:0007669"/>
    <property type="project" value="TreeGrafter"/>
</dbReference>
<dbReference type="GO" id="GO:0004969">
    <property type="term" value="F:histamine receptor activity"/>
    <property type="evidence" value="ECO:0007669"/>
    <property type="project" value="InterPro"/>
</dbReference>
<dbReference type="GO" id="GO:0030594">
    <property type="term" value="F:neurotransmitter receptor activity"/>
    <property type="evidence" value="ECO:0007669"/>
    <property type="project" value="TreeGrafter"/>
</dbReference>
<dbReference type="GO" id="GO:0007268">
    <property type="term" value="P:chemical synaptic transmission"/>
    <property type="evidence" value="ECO:0007669"/>
    <property type="project" value="TreeGrafter"/>
</dbReference>
<dbReference type="GO" id="GO:0007187">
    <property type="term" value="P:G protein-coupled receptor signaling pathway, coupled to cyclic nucleotide second messenger"/>
    <property type="evidence" value="ECO:0007669"/>
    <property type="project" value="TreeGrafter"/>
</dbReference>
<dbReference type="GO" id="GO:0001696">
    <property type="term" value="P:gastric acid secretion"/>
    <property type="evidence" value="ECO:0007669"/>
    <property type="project" value="InterPro"/>
</dbReference>
<dbReference type="GO" id="GO:0045907">
    <property type="term" value="P:positive regulation of vasoconstriction"/>
    <property type="evidence" value="ECO:0007669"/>
    <property type="project" value="InterPro"/>
</dbReference>
<dbReference type="CDD" id="cd15051">
    <property type="entry name" value="7tmA_Histamine_H2R"/>
    <property type="match status" value="1"/>
</dbReference>
<dbReference type="FunFam" id="1.20.1070.10:FF:000121">
    <property type="entry name" value="Histamine H2 receptor"/>
    <property type="match status" value="1"/>
</dbReference>
<dbReference type="Gene3D" id="1.20.1070.10">
    <property type="entry name" value="Rhodopsin 7-helix transmembrane proteins"/>
    <property type="match status" value="1"/>
</dbReference>
<dbReference type="InterPro" id="IPR000276">
    <property type="entry name" value="GPCR_Rhodpsn"/>
</dbReference>
<dbReference type="InterPro" id="IPR017452">
    <property type="entry name" value="GPCR_Rhodpsn_7TM"/>
</dbReference>
<dbReference type="InterPro" id="IPR000503">
    <property type="entry name" value="Histamine_H2_rcpt"/>
</dbReference>
<dbReference type="PANTHER" id="PTHR24247">
    <property type="entry name" value="5-HYDROXYTRYPTAMINE RECEPTOR"/>
    <property type="match status" value="1"/>
</dbReference>
<dbReference type="PANTHER" id="PTHR24247:SF278">
    <property type="entry name" value="HISTAMINE H2 RECEPTOR"/>
    <property type="match status" value="1"/>
</dbReference>
<dbReference type="Pfam" id="PF00001">
    <property type="entry name" value="7tm_1"/>
    <property type="match status" value="1"/>
</dbReference>
<dbReference type="PRINTS" id="PR00237">
    <property type="entry name" value="GPCRRHODOPSN"/>
</dbReference>
<dbReference type="PRINTS" id="PR00531">
    <property type="entry name" value="HISTAMINEH2R"/>
</dbReference>
<dbReference type="SMART" id="SM01381">
    <property type="entry name" value="7TM_GPCR_Srsx"/>
    <property type="match status" value="1"/>
</dbReference>
<dbReference type="SUPFAM" id="SSF81321">
    <property type="entry name" value="Family A G protein-coupled receptor-like"/>
    <property type="match status" value="1"/>
</dbReference>
<dbReference type="PROSITE" id="PS00237">
    <property type="entry name" value="G_PROTEIN_RECEP_F1_1"/>
    <property type="match status" value="1"/>
</dbReference>
<dbReference type="PROSITE" id="PS50262">
    <property type="entry name" value="G_PROTEIN_RECEP_F1_2"/>
    <property type="match status" value="1"/>
</dbReference>
<protein>
    <recommendedName>
        <fullName>Histamine H2 receptor</fullName>
        <shortName>H2R</shortName>
        <shortName>HH2R</shortName>
    </recommendedName>
    <alternativeName>
        <fullName>Gastric receptor I</fullName>
    </alternativeName>
</protein>
<reference key="1">
    <citation type="journal article" date="2004" name="Mol. Biol. Evol.">
        <title>Human-specific amino acid changes found in 103 protein-coding genes.</title>
        <authorList>
            <person name="Kitano T."/>
            <person name="Liu Y.-H."/>
            <person name="Ueda S."/>
            <person name="Saitou N."/>
        </authorList>
    </citation>
    <scope>NUCLEOTIDE SEQUENCE [GENOMIC DNA]</scope>
    <source>
        <strain>Isolate oran-Po13</strain>
    </source>
</reference>
<name>HRH2_PONPY</name>
<accession>P61752</accession>
<proteinExistence type="inferred from homology"/>
<organism>
    <name type="scientific">Pongo pygmaeus</name>
    <name type="common">Bornean orangutan</name>
    <dbReference type="NCBI Taxonomy" id="9600"/>
    <lineage>
        <taxon>Eukaryota</taxon>
        <taxon>Metazoa</taxon>
        <taxon>Chordata</taxon>
        <taxon>Craniata</taxon>
        <taxon>Vertebrata</taxon>
        <taxon>Euteleostomi</taxon>
        <taxon>Mammalia</taxon>
        <taxon>Eutheria</taxon>
        <taxon>Euarchontoglires</taxon>
        <taxon>Primates</taxon>
        <taxon>Haplorrhini</taxon>
        <taxon>Catarrhini</taxon>
        <taxon>Hominidae</taxon>
        <taxon>Pongo</taxon>
    </lineage>
</organism>
<comment type="function">
    <text evidence="1">The H2 subclass of histamine receptors mediates gastric acid secretion. Also appears to regulate gastrointestinal motility and intestinal secretion. Possible role in regulating cell growth and differentiation. The activity of this receptor is mediated by G proteins which activate adenylyl cyclase and, through a separate G protein-dependent mechanism, the phosphoinositide/protein kinase (PKC) signaling pathway (By similarity).</text>
</comment>
<comment type="subcellular location">
    <subcellularLocation>
        <location>Cell membrane</location>
        <topology>Multi-pass membrane protein</topology>
    </subcellularLocation>
</comment>
<comment type="similarity">
    <text evidence="3">Belongs to the G-protein coupled receptor 1 family.</text>
</comment>
<evidence type="ECO:0000250" key="1"/>
<evidence type="ECO:0000255" key="2"/>
<evidence type="ECO:0000255" key="3">
    <source>
        <dbReference type="PROSITE-ProRule" id="PRU00521"/>
    </source>
</evidence>
<evidence type="ECO:0000256" key="4">
    <source>
        <dbReference type="SAM" id="MobiDB-lite"/>
    </source>
</evidence>
<sequence>MAPNGTASSFCLDSTACKITITVVLAVLILITVAGNVVVCLAVGLNRRLRNLTNCFIVSLAITDLLLGLLVLPFSAIYQLSCKWSFGKVFCNIYTSLDVMLCTASILNLFMISLDRYCAVMDPLRYPVLVTPVRVAISLVLIWVISITLSFLSIHLGWNSRNETSKGNHTTSKCKVQVNEVYGLVDGLVTFYLPLLIMCITYYRIFKVARDQAKRINHISSWKAATIREHKATVTLAAVMGAFIICWFPYFTAFVYRGLRGDDAINEVLEAIVLWLGYANSALNPILYAALNRDFRTGYQQLFCCRLANRNSHKTSLRSNASQLSRTQSREPRQQEEKPLKLQVWSGTEVTAPQGATDR</sequence>
<feature type="chain" id="PRO_0000069687" description="Histamine H2 receptor">
    <location>
        <begin position="1"/>
        <end position="359"/>
    </location>
</feature>
<feature type="topological domain" description="Extracellular" evidence="2">
    <location>
        <begin position="1"/>
        <end position="22"/>
    </location>
</feature>
<feature type="transmembrane region" description="Helical; Name=1" evidence="2">
    <location>
        <begin position="23"/>
        <end position="44"/>
    </location>
</feature>
<feature type="topological domain" description="Cytoplasmic" evidence="2">
    <location>
        <begin position="45"/>
        <end position="57"/>
    </location>
</feature>
<feature type="transmembrane region" description="Helical; Name=2" evidence="2">
    <location>
        <begin position="58"/>
        <end position="81"/>
    </location>
</feature>
<feature type="topological domain" description="Extracellular" evidence="2">
    <location>
        <begin position="82"/>
        <end position="92"/>
    </location>
</feature>
<feature type="transmembrane region" description="Helical; Name=3" evidence="2">
    <location>
        <begin position="93"/>
        <end position="114"/>
    </location>
</feature>
<feature type="topological domain" description="Cytoplasmic" evidence="2">
    <location>
        <begin position="115"/>
        <end position="134"/>
    </location>
</feature>
<feature type="transmembrane region" description="Helical; Name=4" evidence="2">
    <location>
        <begin position="135"/>
        <end position="159"/>
    </location>
</feature>
<feature type="topological domain" description="Extracellular" evidence="2">
    <location>
        <begin position="160"/>
        <end position="180"/>
    </location>
</feature>
<feature type="transmembrane region" description="Helical; Name=5" evidence="2">
    <location>
        <begin position="181"/>
        <end position="204"/>
    </location>
</feature>
<feature type="topological domain" description="Cytoplasmic" evidence="2">
    <location>
        <begin position="205"/>
        <end position="234"/>
    </location>
</feature>
<feature type="transmembrane region" description="Helical; Name=6" evidence="2">
    <location>
        <begin position="235"/>
        <end position="258"/>
    </location>
</feature>
<feature type="topological domain" description="Extracellular" evidence="2">
    <location>
        <begin position="259"/>
        <end position="267"/>
    </location>
</feature>
<feature type="transmembrane region" description="Helical; Name=7" evidence="2">
    <location>
        <begin position="268"/>
        <end position="289"/>
    </location>
</feature>
<feature type="topological domain" description="Cytoplasmic" evidence="2">
    <location>
        <begin position="290"/>
        <end position="359"/>
    </location>
</feature>
<feature type="region of interest" description="Disordered" evidence="4">
    <location>
        <begin position="316"/>
        <end position="340"/>
    </location>
</feature>
<feature type="compositionally biased region" description="Polar residues" evidence="4">
    <location>
        <begin position="317"/>
        <end position="327"/>
    </location>
</feature>
<feature type="compositionally biased region" description="Basic and acidic residues" evidence="4">
    <location>
        <begin position="328"/>
        <end position="340"/>
    </location>
</feature>
<feature type="site" description="Essential for histamine binding" evidence="1">
    <location>
        <position position="98"/>
    </location>
</feature>
<feature type="site" description="Essential for tiotidine binding and implicated in H2 selectivity" evidence="1">
    <location>
        <position position="186"/>
    </location>
</feature>
<feature type="site" description="Implicated in histamine binding" evidence="1">
    <location>
        <position position="190"/>
    </location>
</feature>
<feature type="lipid moiety-binding region" description="S-palmitoyl cysteine" evidence="1">
    <location>
        <position position="305"/>
    </location>
</feature>
<feature type="glycosylation site" description="N-linked (GlcNAc...) asparagine" evidence="2">
    <location>
        <position position="4"/>
    </location>
</feature>
<feature type="disulfide bond" evidence="3">
    <location>
        <begin position="91"/>
        <end position="174"/>
    </location>
</feature>